<evidence type="ECO:0000255" key="1">
    <source>
        <dbReference type="HAMAP-Rule" id="MF_00795"/>
    </source>
</evidence>
<feature type="chain" id="PRO_1000133847" description="PF03932 family protein CutC">
    <location>
        <begin position="1"/>
        <end position="248"/>
    </location>
</feature>
<protein>
    <recommendedName>
        <fullName evidence="1">PF03932 family protein CutC</fullName>
    </recommendedName>
</protein>
<sequence length="248" mass="26637">MALLEICCYSMECALTAQRNGADRIELCAAPKEGGLTPSFGVLRSVREHITIPIHPIIRPRGGDFYYTDGEFAAMLEDIRLVRELGFPGLVTGVLTVDGDVDMSRMEKIMAAAGPLAVTFHRAFDMCANPFNALKNLADAGVARVLTSGQKADAAQGLSIIMELIAQGDAPIIMAGAGVRANNLQNFLDAGVREVHSSAGVLLPSPMRYRNQGLSMSADIQADEYSRYRVEGAAVAEMKGIIVRHQAK</sequence>
<gene>
    <name evidence="1" type="primary">cutC</name>
    <name type="ordered locus">SNSL254_A2066</name>
</gene>
<keyword id="KW-0963">Cytoplasm</keyword>
<accession>B4SVF7</accession>
<comment type="subunit">
    <text evidence="1">Homodimer.</text>
</comment>
<comment type="subcellular location">
    <subcellularLocation>
        <location evidence="1">Cytoplasm</location>
    </subcellularLocation>
</comment>
<comment type="similarity">
    <text evidence="1">Belongs to the CutC family.</text>
</comment>
<comment type="caution">
    <text evidence="1">Once thought to be involved in copper homeostasis, experiments in E.coli have shown this is not the case.</text>
</comment>
<dbReference type="EMBL" id="CP001113">
    <property type="protein sequence ID" value="ACF62470.1"/>
    <property type="molecule type" value="Genomic_DNA"/>
</dbReference>
<dbReference type="RefSeq" id="WP_001185764.1">
    <property type="nucleotide sequence ID" value="NZ_CCMR01000003.1"/>
</dbReference>
<dbReference type="SMR" id="B4SVF7"/>
<dbReference type="KEGG" id="see:SNSL254_A2066"/>
<dbReference type="HOGENOM" id="CLU_050555_3_2_6"/>
<dbReference type="Proteomes" id="UP000008824">
    <property type="component" value="Chromosome"/>
</dbReference>
<dbReference type="GO" id="GO:0005737">
    <property type="term" value="C:cytoplasm"/>
    <property type="evidence" value="ECO:0007669"/>
    <property type="project" value="UniProtKB-SubCell"/>
</dbReference>
<dbReference type="GO" id="GO:0005507">
    <property type="term" value="F:copper ion binding"/>
    <property type="evidence" value="ECO:0007669"/>
    <property type="project" value="TreeGrafter"/>
</dbReference>
<dbReference type="FunFam" id="3.20.20.380:FF:000001">
    <property type="entry name" value="Copper homeostasis protein CutC"/>
    <property type="match status" value="1"/>
</dbReference>
<dbReference type="Gene3D" id="3.20.20.380">
    <property type="entry name" value="Copper homeostasis (CutC) domain"/>
    <property type="match status" value="1"/>
</dbReference>
<dbReference type="HAMAP" id="MF_00795">
    <property type="entry name" value="CutC"/>
    <property type="match status" value="1"/>
</dbReference>
<dbReference type="InterPro" id="IPR005627">
    <property type="entry name" value="CutC-like"/>
</dbReference>
<dbReference type="InterPro" id="IPR036822">
    <property type="entry name" value="CutC-like_dom_sf"/>
</dbReference>
<dbReference type="NCBIfam" id="NF008603">
    <property type="entry name" value="PRK11572.1"/>
    <property type="match status" value="1"/>
</dbReference>
<dbReference type="PANTHER" id="PTHR12598">
    <property type="entry name" value="COPPER HOMEOSTASIS PROTEIN CUTC"/>
    <property type="match status" value="1"/>
</dbReference>
<dbReference type="PANTHER" id="PTHR12598:SF0">
    <property type="entry name" value="COPPER HOMEOSTASIS PROTEIN CUTC HOMOLOG"/>
    <property type="match status" value="1"/>
</dbReference>
<dbReference type="Pfam" id="PF03932">
    <property type="entry name" value="CutC"/>
    <property type="match status" value="1"/>
</dbReference>
<dbReference type="SUPFAM" id="SSF110395">
    <property type="entry name" value="CutC-like"/>
    <property type="match status" value="1"/>
</dbReference>
<name>CUTC_SALNS</name>
<organism>
    <name type="scientific">Salmonella newport (strain SL254)</name>
    <dbReference type="NCBI Taxonomy" id="423368"/>
    <lineage>
        <taxon>Bacteria</taxon>
        <taxon>Pseudomonadati</taxon>
        <taxon>Pseudomonadota</taxon>
        <taxon>Gammaproteobacteria</taxon>
        <taxon>Enterobacterales</taxon>
        <taxon>Enterobacteriaceae</taxon>
        <taxon>Salmonella</taxon>
    </lineage>
</organism>
<proteinExistence type="inferred from homology"/>
<reference key="1">
    <citation type="journal article" date="2011" name="J. Bacteriol.">
        <title>Comparative genomics of 28 Salmonella enterica isolates: evidence for CRISPR-mediated adaptive sublineage evolution.</title>
        <authorList>
            <person name="Fricke W.F."/>
            <person name="Mammel M.K."/>
            <person name="McDermott P.F."/>
            <person name="Tartera C."/>
            <person name="White D.G."/>
            <person name="Leclerc J.E."/>
            <person name="Ravel J."/>
            <person name="Cebula T.A."/>
        </authorList>
    </citation>
    <scope>NUCLEOTIDE SEQUENCE [LARGE SCALE GENOMIC DNA]</scope>
    <source>
        <strain>SL254</strain>
    </source>
</reference>